<sequence>MSKSALLVLEDGTVFRGVSIGADGISVGEVVFNTSMTGYQEILTDPSYSQQIVTLTYPHIGNTGTNSEDEESTAIHAQGLVIRDLPLIASNFRSEQSLSDYLKSQNIVGIADIDTRKLTRILREKGAQNGCIMAGDNLDEALALAKAKEFPGLKGMDLAKVVSTKEAYAWKQGSWTLEGGLPEAKADSELPYHVVAYDFGAKRNILRMLVDRGCRLTVVPAQTSAEDVLALNPDGVFLSNGPGDPEPCTYAIEATRVFLEKNIPVFGICLGHQILALASGAKTVKMKFGHHGANHPVKDLDRGVVMITSQNHGFAADEATLPDNLRATHKSLFDGSLQGIHRTDKPAFSFQGHPEASPGPHDAAPLFDHFIELIKQFRA</sequence>
<comment type="function">
    <text evidence="1">Small subunit of the glutamine-dependent carbamoyl phosphate synthetase (CPSase). CPSase catalyzes the formation of carbamoyl phosphate from the ammonia moiety of glutamine, carbonate, and phosphate donated by ATP, constituting the first step of 2 biosynthetic pathways, one leading to arginine and/or urea and the other to pyrimidine nucleotides. The small subunit (glutamine amidotransferase) binds and cleaves glutamine to supply the large subunit with the substrate ammonia.</text>
</comment>
<comment type="catalytic activity">
    <reaction evidence="1">
        <text>hydrogencarbonate + L-glutamine + 2 ATP + H2O = carbamoyl phosphate + L-glutamate + 2 ADP + phosphate + 2 H(+)</text>
        <dbReference type="Rhea" id="RHEA:18633"/>
        <dbReference type="ChEBI" id="CHEBI:15377"/>
        <dbReference type="ChEBI" id="CHEBI:15378"/>
        <dbReference type="ChEBI" id="CHEBI:17544"/>
        <dbReference type="ChEBI" id="CHEBI:29985"/>
        <dbReference type="ChEBI" id="CHEBI:30616"/>
        <dbReference type="ChEBI" id="CHEBI:43474"/>
        <dbReference type="ChEBI" id="CHEBI:58228"/>
        <dbReference type="ChEBI" id="CHEBI:58359"/>
        <dbReference type="ChEBI" id="CHEBI:456216"/>
        <dbReference type="EC" id="6.3.5.5"/>
    </reaction>
</comment>
<comment type="catalytic activity">
    <molecule>Carbamoyl phosphate synthase small chain</molecule>
    <reaction evidence="1">
        <text>L-glutamine + H2O = L-glutamate + NH4(+)</text>
        <dbReference type="Rhea" id="RHEA:15889"/>
        <dbReference type="ChEBI" id="CHEBI:15377"/>
        <dbReference type="ChEBI" id="CHEBI:28938"/>
        <dbReference type="ChEBI" id="CHEBI:29985"/>
        <dbReference type="ChEBI" id="CHEBI:58359"/>
    </reaction>
</comment>
<comment type="pathway">
    <text evidence="1">Amino-acid biosynthesis; L-arginine biosynthesis; carbamoyl phosphate from bicarbonate: step 1/1.</text>
</comment>
<comment type="pathway">
    <text evidence="1">Pyrimidine metabolism; UMP biosynthesis via de novo pathway; (S)-dihydroorotate from bicarbonate: step 1/3.</text>
</comment>
<comment type="subunit">
    <text evidence="1">Composed of two chains; the small (or glutamine) chain promotes the hydrolysis of glutamine to ammonia, which is used by the large (or ammonia) chain to synthesize carbamoyl phosphate. Tetramer of heterodimers (alpha,beta)4.</text>
</comment>
<comment type="similarity">
    <text evidence="1">Belongs to the CarA family.</text>
</comment>
<dbReference type="EC" id="6.3.5.5" evidence="1"/>
<dbReference type="EMBL" id="AE003852">
    <property type="protein sequence ID" value="AAF95533.1"/>
    <property type="molecule type" value="Genomic_DNA"/>
</dbReference>
<dbReference type="PIR" id="E82083">
    <property type="entry name" value="E82083"/>
</dbReference>
<dbReference type="RefSeq" id="NP_232020.1">
    <property type="nucleotide sequence ID" value="NC_002505.1"/>
</dbReference>
<dbReference type="RefSeq" id="WP_000045131.1">
    <property type="nucleotide sequence ID" value="NZ_LT906614.1"/>
</dbReference>
<dbReference type="SMR" id="Q9KPH8"/>
<dbReference type="STRING" id="243277.VC_2390"/>
<dbReference type="MEROPS" id="C26.954"/>
<dbReference type="DNASU" id="2613059"/>
<dbReference type="EnsemblBacteria" id="AAF95533">
    <property type="protein sequence ID" value="AAF95533"/>
    <property type="gene ID" value="VC_2390"/>
</dbReference>
<dbReference type="GeneID" id="69719002"/>
<dbReference type="KEGG" id="vch:VC_2390"/>
<dbReference type="PATRIC" id="fig|243277.26.peg.2276"/>
<dbReference type="eggNOG" id="COG0505">
    <property type="taxonomic scope" value="Bacteria"/>
</dbReference>
<dbReference type="HOGENOM" id="CLU_035901_2_1_6"/>
<dbReference type="UniPathway" id="UPA00068">
    <property type="reaction ID" value="UER00171"/>
</dbReference>
<dbReference type="UniPathway" id="UPA00070">
    <property type="reaction ID" value="UER00115"/>
</dbReference>
<dbReference type="Proteomes" id="UP000000584">
    <property type="component" value="Chromosome 1"/>
</dbReference>
<dbReference type="GO" id="GO:0005951">
    <property type="term" value="C:carbamoyl-phosphate synthase complex"/>
    <property type="evidence" value="ECO:0000318"/>
    <property type="project" value="GO_Central"/>
</dbReference>
<dbReference type="GO" id="GO:0005737">
    <property type="term" value="C:cytoplasm"/>
    <property type="evidence" value="ECO:0000318"/>
    <property type="project" value="GO_Central"/>
</dbReference>
<dbReference type="GO" id="GO:0005524">
    <property type="term" value="F:ATP binding"/>
    <property type="evidence" value="ECO:0007669"/>
    <property type="project" value="UniProtKB-UniRule"/>
</dbReference>
<dbReference type="GO" id="GO:0004088">
    <property type="term" value="F:carbamoyl-phosphate synthase (glutamine-hydrolyzing) activity"/>
    <property type="evidence" value="ECO:0007669"/>
    <property type="project" value="UniProtKB-UniRule"/>
</dbReference>
<dbReference type="GO" id="GO:0004359">
    <property type="term" value="F:glutaminase activity"/>
    <property type="evidence" value="ECO:0007669"/>
    <property type="project" value="RHEA"/>
</dbReference>
<dbReference type="GO" id="GO:0006207">
    <property type="term" value="P:'de novo' pyrimidine nucleobase biosynthetic process"/>
    <property type="evidence" value="ECO:0007669"/>
    <property type="project" value="InterPro"/>
</dbReference>
<dbReference type="GO" id="GO:0044205">
    <property type="term" value="P:'de novo' UMP biosynthetic process"/>
    <property type="evidence" value="ECO:0007669"/>
    <property type="project" value="UniProtKB-UniRule"/>
</dbReference>
<dbReference type="GO" id="GO:0006541">
    <property type="term" value="P:glutamine metabolic process"/>
    <property type="evidence" value="ECO:0007669"/>
    <property type="project" value="InterPro"/>
</dbReference>
<dbReference type="GO" id="GO:0006526">
    <property type="term" value="P:L-arginine biosynthetic process"/>
    <property type="evidence" value="ECO:0000318"/>
    <property type="project" value="GO_Central"/>
</dbReference>
<dbReference type="CDD" id="cd01744">
    <property type="entry name" value="GATase1_CPSase"/>
    <property type="match status" value="1"/>
</dbReference>
<dbReference type="FunFam" id="3.40.50.880:FF:000011">
    <property type="entry name" value="Carbamoyl-phosphate synthase small chain"/>
    <property type="match status" value="1"/>
</dbReference>
<dbReference type="FunFam" id="3.50.30.20:FF:000001">
    <property type="entry name" value="Carbamoyl-phosphate synthase small chain"/>
    <property type="match status" value="1"/>
</dbReference>
<dbReference type="Gene3D" id="3.40.50.880">
    <property type="match status" value="1"/>
</dbReference>
<dbReference type="Gene3D" id="3.50.30.20">
    <property type="entry name" value="Carbamoyl-phosphate synthase small subunit, N-terminal domain"/>
    <property type="match status" value="1"/>
</dbReference>
<dbReference type="HAMAP" id="MF_01209">
    <property type="entry name" value="CPSase_S_chain"/>
    <property type="match status" value="1"/>
</dbReference>
<dbReference type="InterPro" id="IPR050472">
    <property type="entry name" value="Anth_synth/Amidotransfase"/>
</dbReference>
<dbReference type="InterPro" id="IPR006274">
    <property type="entry name" value="CarbamoylP_synth_ssu"/>
</dbReference>
<dbReference type="InterPro" id="IPR002474">
    <property type="entry name" value="CarbamoylP_synth_ssu_N"/>
</dbReference>
<dbReference type="InterPro" id="IPR036480">
    <property type="entry name" value="CarbP_synth_ssu_N_sf"/>
</dbReference>
<dbReference type="InterPro" id="IPR029062">
    <property type="entry name" value="Class_I_gatase-like"/>
</dbReference>
<dbReference type="InterPro" id="IPR035686">
    <property type="entry name" value="CPSase_GATase1"/>
</dbReference>
<dbReference type="InterPro" id="IPR017926">
    <property type="entry name" value="GATASE"/>
</dbReference>
<dbReference type="NCBIfam" id="TIGR01368">
    <property type="entry name" value="CPSaseIIsmall"/>
    <property type="match status" value="1"/>
</dbReference>
<dbReference type="NCBIfam" id="NF009475">
    <property type="entry name" value="PRK12838.1"/>
    <property type="match status" value="1"/>
</dbReference>
<dbReference type="PANTHER" id="PTHR43418:SF7">
    <property type="entry name" value="CARBAMOYL-PHOSPHATE SYNTHASE SMALL CHAIN"/>
    <property type="match status" value="1"/>
</dbReference>
<dbReference type="PANTHER" id="PTHR43418">
    <property type="entry name" value="MULTIFUNCTIONAL TRYPTOPHAN BIOSYNTHESIS PROTEIN-RELATED"/>
    <property type="match status" value="1"/>
</dbReference>
<dbReference type="Pfam" id="PF00988">
    <property type="entry name" value="CPSase_sm_chain"/>
    <property type="match status" value="1"/>
</dbReference>
<dbReference type="Pfam" id="PF00117">
    <property type="entry name" value="GATase"/>
    <property type="match status" value="1"/>
</dbReference>
<dbReference type="PRINTS" id="PR00097">
    <property type="entry name" value="ANTSNTHASEII"/>
</dbReference>
<dbReference type="PRINTS" id="PR00099">
    <property type="entry name" value="CPSGATASE"/>
</dbReference>
<dbReference type="PRINTS" id="PR00096">
    <property type="entry name" value="GATASE"/>
</dbReference>
<dbReference type="SMART" id="SM01097">
    <property type="entry name" value="CPSase_sm_chain"/>
    <property type="match status" value="1"/>
</dbReference>
<dbReference type="SUPFAM" id="SSF52021">
    <property type="entry name" value="Carbamoyl phosphate synthetase, small subunit N-terminal domain"/>
    <property type="match status" value="1"/>
</dbReference>
<dbReference type="SUPFAM" id="SSF52317">
    <property type="entry name" value="Class I glutamine amidotransferase-like"/>
    <property type="match status" value="1"/>
</dbReference>
<dbReference type="PROSITE" id="PS51273">
    <property type="entry name" value="GATASE_TYPE_1"/>
    <property type="match status" value="1"/>
</dbReference>
<keyword id="KW-0028">Amino-acid biosynthesis</keyword>
<keyword id="KW-0055">Arginine biosynthesis</keyword>
<keyword id="KW-0067">ATP-binding</keyword>
<keyword id="KW-0315">Glutamine amidotransferase</keyword>
<keyword id="KW-0436">Ligase</keyword>
<keyword id="KW-0547">Nucleotide-binding</keyword>
<keyword id="KW-0665">Pyrimidine biosynthesis</keyword>
<keyword id="KW-1185">Reference proteome</keyword>
<proteinExistence type="inferred from homology"/>
<name>CARA_VIBCH</name>
<accession>Q9KPH8</accession>
<evidence type="ECO:0000255" key="1">
    <source>
        <dbReference type="HAMAP-Rule" id="MF_01209"/>
    </source>
</evidence>
<reference key="1">
    <citation type="journal article" date="2000" name="Nature">
        <title>DNA sequence of both chromosomes of the cholera pathogen Vibrio cholerae.</title>
        <authorList>
            <person name="Heidelberg J.F."/>
            <person name="Eisen J.A."/>
            <person name="Nelson W.C."/>
            <person name="Clayton R.A."/>
            <person name="Gwinn M.L."/>
            <person name="Dodson R.J."/>
            <person name="Haft D.H."/>
            <person name="Hickey E.K."/>
            <person name="Peterson J.D."/>
            <person name="Umayam L.A."/>
            <person name="Gill S.R."/>
            <person name="Nelson K.E."/>
            <person name="Read T.D."/>
            <person name="Tettelin H."/>
            <person name="Richardson D.L."/>
            <person name="Ermolaeva M.D."/>
            <person name="Vamathevan J.J."/>
            <person name="Bass S."/>
            <person name="Qin H."/>
            <person name="Dragoi I."/>
            <person name="Sellers P."/>
            <person name="McDonald L.A."/>
            <person name="Utterback T.R."/>
            <person name="Fleischmann R.D."/>
            <person name="Nierman W.C."/>
            <person name="White O."/>
            <person name="Salzberg S.L."/>
            <person name="Smith H.O."/>
            <person name="Colwell R.R."/>
            <person name="Mekalanos J.J."/>
            <person name="Venter J.C."/>
            <person name="Fraser C.M."/>
        </authorList>
    </citation>
    <scope>NUCLEOTIDE SEQUENCE [LARGE SCALE GENOMIC DNA]</scope>
    <source>
        <strain>ATCC 39315 / El Tor Inaba N16961</strain>
    </source>
</reference>
<gene>
    <name evidence="1" type="primary">carA</name>
    <name type="ordered locus">VC_2390</name>
</gene>
<organism>
    <name type="scientific">Vibrio cholerae serotype O1 (strain ATCC 39315 / El Tor Inaba N16961)</name>
    <dbReference type="NCBI Taxonomy" id="243277"/>
    <lineage>
        <taxon>Bacteria</taxon>
        <taxon>Pseudomonadati</taxon>
        <taxon>Pseudomonadota</taxon>
        <taxon>Gammaproteobacteria</taxon>
        <taxon>Vibrionales</taxon>
        <taxon>Vibrionaceae</taxon>
        <taxon>Vibrio</taxon>
    </lineage>
</organism>
<protein>
    <recommendedName>
        <fullName evidence="1">Carbamoyl phosphate synthase small chain</fullName>
        <ecNumber evidence="1">6.3.5.5</ecNumber>
    </recommendedName>
    <alternativeName>
        <fullName evidence="1">Carbamoyl phosphate synthetase glutamine chain</fullName>
    </alternativeName>
</protein>
<feature type="chain" id="PRO_0000112343" description="Carbamoyl phosphate synthase small chain">
    <location>
        <begin position="1"/>
        <end position="379"/>
    </location>
</feature>
<feature type="domain" description="Glutamine amidotransferase type-1" evidence="1">
    <location>
        <begin position="193"/>
        <end position="379"/>
    </location>
</feature>
<feature type="region of interest" description="CPSase" evidence="1">
    <location>
        <begin position="1"/>
        <end position="189"/>
    </location>
</feature>
<feature type="active site" description="Nucleophile" evidence="1">
    <location>
        <position position="269"/>
    </location>
</feature>
<feature type="active site" evidence="1">
    <location>
        <position position="353"/>
    </location>
</feature>
<feature type="active site" evidence="1">
    <location>
        <position position="355"/>
    </location>
</feature>
<feature type="binding site" evidence="1">
    <location>
        <position position="47"/>
    </location>
    <ligand>
        <name>L-glutamine</name>
        <dbReference type="ChEBI" id="CHEBI:58359"/>
    </ligand>
</feature>
<feature type="binding site" evidence="1">
    <location>
        <position position="241"/>
    </location>
    <ligand>
        <name>L-glutamine</name>
        <dbReference type="ChEBI" id="CHEBI:58359"/>
    </ligand>
</feature>
<feature type="binding site" evidence="1">
    <location>
        <position position="243"/>
    </location>
    <ligand>
        <name>L-glutamine</name>
        <dbReference type="ChEBI" id="CHEBI:58359"/>
    </ligand>
</feature>
<feature type="binding site" evidence="1">
    <location>
        <position position="270"/>
    </location>
    <ligand>
        <name>L-glutamine</name>
        <dbReference type="ChEBI" id="CHEBI:58359"/>
    </ligand>
</feature>
<feature type="binding site" evidence="1">
    <location>
        <position position="273"/>
    </location>
    <ligand>
        <name>L-glutamine</name>
        <dbReference type="ChEBI" id="CHEBI:58359"/>
    </ligand>
</feature>
<feature type="binding site" evidence="1">
    <location>
        <position position="311"/>
    </location>
    <ligand>
        <name>L-glutamine</name>
        <dbReference type="ChEBI" id="CHEBI:58359"/>
    </ligand>
</feature>
<feature type="binding site" evidence="1">
    <location>
        <position position="313"/>
    </location>
    <ligand>
        <name>L-glutamine</name>
        <dbReference type="ChEBI" id="CHEBI:58359"/>
    </ligand>
</feature>
<feature type="binding site" evidence="1">
    <location>
        <position position="314"/>
    </location>
    <ligand>
        <name>L-glutamine</name>
        <dbReference type="ChEBI" id="CHEBI:58359"/>
    </ligand>
</feature>